<gene>
    <name evidence="6" type="primary">LDO45</name>
    <name type="ordered locus">YMR147W</name>
    <name type="ORF">YM9375.17</name>
</gene>
<sequence length="412" mass="46677">MAARNRRKNNKKKSLLVTSAAQEKNATYVLVAEELHKKTIDLNMGTETPLTENHENPIPAKEFKHQQKLEPIDEHDDGEDELSIKFKSMTKSSGPITEAEVQKLLLSYAFTSAAIQEDENEKESRHYPIKPPSPSASSLSAYFQSFVEKCKQVFYNFSLQTVEKLNALQNSLYEVFWIIFIYLNYWFPNVGDYVSNTFGQQDSIIIRISLSKSHFRALREKSSQKVQQAVKNIYFCFQEKPYLTAFKVSFAIGLVIPCSLLFLIMVSTATFFFFVYLTLFVVIGFFSSLFIIPLLGISFVFAIGVVSFGFCSNMSFKMAQLIYVRADAFLKKVLDKMALQTQPAQLQEPQEPLSTLRPVSNPTIPSPLRQTARPSKFVTEEDVIFEPVSAQSAIARSLETTANKAGNKFQLS</sequence>
<protein>
    <recommendedName>
        <fullName evidence="8">Lipid droplet organization protein LDO45</fullName>
    </recommendedName>
    <alternativeName>
        <fullName evidence="6">Lipid droplet organization 45 KDa protein</fullName>
    </alternativeName>
</protein>
<reference key="1">
    <citation type="journal article" date="1997" name="Nature">
        <title>The nucleotide sequence of Saccharomyces cerevisiae chromosome XIII.</title>
        <authorList>
            <person name="Bowman S."/>
            <person name="Churcher C.M."/>
            <person name="Badcock K."/>
            <person name="Brown D."/>
            <person name="Chillingworth T."/>
            <person name="Connor R."/>
            <person name="Dedman K."/>
            <person name="Devlin K."/>
            <person name="Gentles S."/>
            <person name="Hamlin N."/>
            <person name="Hunt S."/>
            <person name="Jagels K."/>
            <person name="Lye G."/>
            <person name="Moule S."/>
            <person name="Odell C."/>
            <person name="Pearson D."/>
            <person name="Rajandream M.A."/>
            <person name="Rice P."/>
            <person name="Skelton J."/>
            <person name="Walsh S.V."/>
            <person name="Whitehead S."/>
            <person name="Barrell B.G."/>
        </authorList>
    </citation>
    <scope>NUCLEOTIDE SEQUENCE [LARGE SCALE GENOMIC DNA]</scope>
    <source>
        <strain>ATCC 204508 / S288c</strain>
    </source>
</reference>
<reference key="2">
    <citation type="journal article" date="2014" name="G3 (Bethesda)">
        <title>The reference genome sequence of Saccharomyces cerevisiae: Then and now.</title>
        <authorList>
            <person name="Engel S.R."/>
            <person name="Dietrich F.S."/>
            <person name="Fisk D.G."/>
            <person name="Binkley G."/>
            <person name="Balakrishnan R."/>
            <person name="Costanzo M.C."/>
            <person name="Dwight S.S."/>
            <person name="Hitz B.C."/>
            <person name="Karra K."/>
            <person name="Nash R.S."/>
            <person name="Weng S."/>
            <person name="Wong E.D."/>
            <person name="Lloyd P."/>
            <person name="Skrzypek M.S."/>
            <person name="Miyasato S.R."/>
            <person name="Simison M."/>
            <person name="Cherry J.M."/>
        </authorList>
    </citation>
    <scope>GENOME REANNOTATION</scope>
    <source>
        <strain>ATCC 204508 / S288c</strain>
    </source>
</reference>
<reference key="3">
    <citation type="journal article" date="2007" name="Genome Res.">
        <title>Approaching a complete repository of sequence-verified protein-encoding clones for Saccharomyces cerevisiae.</title>
        <authorList>
            <person name="Hu Y."/>
            <person name="Rolfs A."/>
            <person name="Bhullar B."/>
            <person name="Murthy T.V.S."/>
            <person name="Zhu C."/>
            <person name="Berger M.F."/>
            <person name="Camargo A.A."/>
            <person name="Kelley F."/>
            <person name="McCarron S."/>
            <person name="Jepson D."/>
            <person name="Richardson A."/>
            <person name="Raphael J."/>
            <person name="Moreira D."/>
            <person name="Taycher E."/>
            <person name="Zuo D."/>
            <person name="Mohr S."/>
            <person name="Kane M.F."/>
            <person name="Williamson J."/>
            <person name="Simpson A.J.G."/>
            <person name="Bulyk M.L."/>
            <person name="Harlow E."/>
            <person name="Marsischky G."/>
            <person name="Kolodner R.D."/>
            <person name="LaBaer J."/>
        </authorList>
    </citation>
    <scope>NUCLEOTIDE SEQUENCE [GENOMIC DNA] OF 1-194</scope>
    <source>
        <strain>ATCC 204508 / S288c</strain>
    </source>
</reference>
<reference key="4">
    <citation type="journal article" date="2008" name="Mol. Cell. Proteomics">
        <title>A multidimensional chromatography technology for in-depth phosphoproteome analysis.</title>
        <authorList>
            <person name="Albuquerque C.P."/>
            <person name="Smolka M.B."/>
            <person name="Payne S.H."/>
            <person name="Bafna V."/>
            <person name="Eng J."/>
            <person name="Zhou H."/>
        </authorList>
    </citation>
    <scope>IDENTIFICATION BY MASS SPECTROMETRY [LARGE SCALE ANALYSIS]</scope>
</reference>
<reference key="5">
    <citation type="journal article" date="2014" name="Stat. Appl. Genet. Mol. Biol.">
        <title>Scan statistics analysis for detection of introns in time-course tiling array data.</title>
        <authorList>
            <person name="Reiner-Benaim A."/>
            <person name="Davis R.W."/>
            <person name="Juneau K."/>
        </authorList>
    </citation>
    <scope>IDENTIFICATION OF INTRON</scope>
</reference>
<reference key="6">
    <citation type="journal article" date="2018" name="J. Cell Biol.">
        <title>Regulation of lipid droplets by metabolically controlled Ldo isoforms.</title>
        <authorList>
            <person name="Teixeira V."/>
            <person name="Johnsen L."/>
            <person name="Martinez-Montanes F."/>
            <person name="Grippa A."/>
            <person name="Buxo L."/>
            <person name="Idrissi F.Z."/>
            <person name="Ejsing C.S."/>
            <person name="Carvalho P."/>
        </authorList>
    </citation>
    <scope>ALTERNATIVE SPLICING</scope>
    <scope>SUBCELLULAR LOCATION</scope>
    <scope>INTERACTION WITH FLD1 AND LDB16</scope>
    <scope>INDUCTION</scope>
    <scope>IDENTIFICATION BY MASS SPECTROMETRY</scope>
</reference>
<reference key="7">
    <citation type="journal article" date="2018" name="J. Cell Biol.">
        <title>Identification of seipin-linked factors that act as determinants of a lipid droplet subpopulation.</title>
        <authorList>
            <person name="Eisenberg-Bord M."/>
            <person name="Mari M."/>
            <person name="Weill U."/>
            <person name="Rosenfeld-Gur E."/>
            <person name="Moldavski O."/>
            <person name="Castro I.G."/>
            <person name="Soni K.G."/>
            <person name="Harpaz N."/>
            <person name="Levine T.P."/>
            <person name="Futerman A.H."/>
            <person name="Reggiori F."/>
            <person name="Bankaitis V.A."/>
            <person name="Schuldiner M."/>
            <person name="Bohnert M."/>
        </authorList>
    </citation>
    <scope>ALTERNATIVE SPLICING</scope>
    <scope>FUNCTION</scope>
    <scope>SUBUNIT</scope>
</reference>
<dbReference type="EMBL" id="Z47071">
    <property type="protein sequence ID" value="CAA87362.1"/>
    <property type="molecule type" value="Genomic_DNA"/>
</dbReference>
<dbReference type="EMBL" id="AY558417">
    <property type="protein sequence ID" value="AAS56743.1"/>
    <property type="molecule type" value="Genomic_DNA"/>
</dbReference>
<dbReference type="EMBL" id="BK006946">
    <property type="protein sequence ID" value="DAA10043.2"/>
    <property type="molecule type" value="Genomic_DNA"/>
</dbReference>
<dbReference type="PIR" id="S50404">
    <property type="entry name" value="S50404"/>
</dbReference>
<dbReference type="RefSeq" id="NP_013867.2">
    <molecule id="P40218-1"/>
    <property type="nucleotide sequence ID" value="NM_001182649.2"/>
</dbReference>
<dbReference type="SMR" id="P40218"/>
<dbReference type="BioGRID" id="35323">
    <property type="interactions" value="88"/>
</dbReference>
<dbReference type="DIP" id="DIP-3902N"/>
<dbReference type="FunCoup" id="P40218">
    <property type="interactions" value="5"/>
</dbReference>
<dbReference type="IntAct" id="P40218">
    <property type="interactions" value="6"/>
</dbReference>
<dbReference type="MINT" id="P40218"/>
<dbReference type="STRING" id="4932.YMR147W"/>
<dbReference type="GlyGen" id="P40218">
    <property type="glycosylation" value="2 sites, 1 O-linked glycan (2 sites)"/>
</dbReference>
<dbReference type="iPTMnet" id="P40218"/>
<dbReference type="PaxDb" id="4932-YMR147W"/>
<dbReference type="PeptideAtlas" id="P40218"/>
<dbReference type="EnsemblFungi" id="YMR147W_mRNA">
    <property type="protein sequence ID" value="YMR147W"/>
    <property type="gene ID" value="YMR147W"/>
</dbReference>
<dbReference type="GeneID" id="855178"/>
<dbReference type="KEGG" id="sce:YMR147W"/>
<dbReference type="AGR" id="SGD:S000004755"/>
<dbReference type="SGD" id="S000004755">
    <property type="gene designation" value="LDO45"/>
</dbReference>
<dbReference type="VEuPathDB" id="FungiDB:YMR147W"/>
<dbReference type="eggNOG" id="ENOG502SE7V">
    <property type="taxonomic scope" value="Eukaryota"/>
</dbReference>
<dbReference type="HOGENOM" id="CLU_1240990_0_0_1"/>
<dbReference type="InParanoid" id="P40218"/>
<dbReference type="OrthoDB" id="4070395at2759"/>
<dbReference type="BioCyc" id="YEAST:G3O-32839-MONOMER"/>
<dbReference type="BioGRID-ORCS" id="855178">
    <property type="hits" value="3 hits in 10 CRISPR screens"/>
</dbReference>
<dbReference type="ChiTaRS" id="YMR147W">
    <property type="organism name" value="yeast"/>
</dbReference>
<dbReference type="PRO" id="PR:P40218"/>
<dbReference type="Proteomes" id="UP000002311">
    <property type="component" value="Chromosome XIII"/>
</dbReference>
<dbReference type="RNAct" id="P40218">
    <property type="molecule type" value="protein"/>
</dbReference>
<dbReference type="GO" id="GO:0071944">
    <property type="term" value="C:cell periphery"/>
    <property type="evidence" value="ECO:0007005"/>
    <property type="project" value="SGD"/>
</dbReference>
<dbReference type="GO" id="GO:0005789">
    <property type="term" value="C:endoplasmic reticulum membrane"/>
    <property type="evidence" value="ECO:0007669"/>
    <property type="project" value="UniProtKB-SubCell"/>
</dbReference>
<dbReference type="GO" id="GO:0005811">
    <property type="term" value="C:lipid droplet"/>
    <property type="evidence" value="ECO:0000314"/>
    <property type="project" value="SGD"/>
</dbReference>
<dbReference type="GO" id="GO:0044877">
    <property type="term" value="F:protein-containing complex binding"/>
    <property type="evidence" value="ECO:0000314"/>
    <property type="project" value="SGD"/>
</dbReference>
<dbReference type="GO" id="GO:0034389">
    <property type="term" value="P:lipid droplet organization"/>
    <property type="evidence" value="ECO:0000315"/>
    <property type="project" value="SGD"/>
</dbReference>
<dbReference type="InterPro" id="IPR031430">
    <property type="entry name" value="Osw5"/>
</dbReference>
<dbReference type="Pfam" id="PF17062">
    <property type="entry name" value="Osw5"/>
    <property type="match status" value="1"/>
</dbReference>
<dbReference type="Pfam" id="PF16015">
    <property type="entry name" value="Promethin"/>
    <property type="match status" value="1"/>
</dbReference>
<keyword id="KW-0025">Alternative splicing</keyword>
<keyword id="KW-0256">Endoplasmic reticulum</keyword>
<keyword id="KW-0551">Lipid droplet</keyword>
<keyword id="KW-0472">Membrane</keyword>
<keyword id="KW-1185">Reference proteome</keyword>
<keyword id="KW-0812">Transmembrane</keyword>
<keyword id="KW-1133">Transmembrane helix</keyword>
<comment type="function">
    <text evidence="4 5">Involved in lipid droplet (LD) organization. Modulates triglyceride (TAG) storage by reducing DGA1 LD localization (PubMed:29187528). Promotes LD targeting of some proteins, including PDR16 (PubMed:29187527, PubMed:29187528).</text>
</comment>
<comment type="subunit">
    <text evidence="4 5">Interacts specifically with the seipin complex FLD1-LDB16. Only a fraction appears to associate with the seipin core components, suggesting that it may be an ancillary subunit of the complex.</text>
</comment>
<comment type="subcellular location">
    <subcellularLocation>
        <location evidence="5">Endoplasmic reticulum membrane</location>
        <topology evidence="2">Multi-pass membrane protein</topology>
    </subcellularLocation>
    <subcellularLocation>
        <location evidence="5">Lipid droplet</location>
    </subcellularLocation>
    <text evidence="9">Contains a predicted membrane hairpin, a motif allowing association with both ER bilayers and LD monolayers.</text>
</comment>
<comment type="alternative products">
    <event type="alternative splicing"/>
    <isoform>
        <id>P40218-1</id>
        <name evidence="6 7">LDO45</name>
        <sequence type="displayed"/>
    </isoform>
    <isoform>
        <id>P40219-1</id>
        <name evidence="6 7">LDO16</name>
        <sequence type="external"/>
    </isoform>
</comment>
<comment type="induction">
    <text evidence="5">Levels gradually but drastically drop as cells approach stationary phase (at protein level).</text>
</comment>
<comment type="miscellaneous">
    <molecule>Isoform LDO45</molecule>
    <text evidence="4 5">Produced by splicing, generating a hybrid transcript with downstream ORF YMR148W. Splicing excludes the sequence coding for the last 29 amino acids of the originally predicted YMR147W ORF and includes a 210-bp intragenic region 5' of the YMR148W ORF and the entire YMR148W coding region (PubMed:29187527, PubMed:29187528). The originally predicted intronless YMR147W ORF is not expressed in detectable amounts (PubMed:29187527).</text>
</comment>
<proteinExistence type="evidence at protein level"/>
<accession>P40218</accession>
<accession>D6VZW9</accession>
<organism>
    <name type="scientific">Saccharomyces cerevisiae (strain ATCC 204508 / S288c)</name>
    <name type="common">Baker's yeast</name>
    <dbReference type="NCBI Taxonomy" id="559292"/>
    <lineage>
        <taxon>Eukaryota</taxon>
        <taxon>Fungi</taxon>
        <taxon>Dikarya</taxon>
        <taxon>Ascomycota</taxon>
        <taxon>Saccharomycotina</taxon>
        <taxon>Saccharomycetes</taxon>
        <taxon>Saccharomycetales</taxon>
        <taxon>Saccharomycetaceae</taxon>
        <taxon>Saccharomyces</taxon>
    </lineage>
</organism>
<name>LDO45_YEAST</name>
<feature type="chain" id="PRO_0000203307" description="Lipid droplet organization protein LDO45">
    <location>
        <begin position="1"/>
        <end position="412"/>
    </location>
</feature>
<feature type="topological domain" description="Cytoplasmic" evidence="8">
    <location>
        <begin position="1"/>
        <end position="170"/>
    </location>
</feature>
<feature type="transmembrane region" description="Helical" evidence="2">
    <location>
        <begin position="171"/>
        <end position="191"/>
    </location>
</feature>
<feature type="topological domain" description="Lumenal" evidence="8">
    <location>
        <begin position="192"/>
        <end position="247"/>
    </location>
</feature>
<feature type="transmembrane region" description="Helical" evidence="2">
    <location>
        <begin position="248"/>
        <end position="268"/>
    </location>
</feature>
<feature type="topological domain" description="Cytoplasmic" evidence="1">
    <location>
        <begin position="269"/>
        <end position="271"/>
    </location>
</feature>
<feature type="transmembrane region" description="Helical" evidence="2">
    <location>
        <begin position="272"/>
        <end position="292"/>
    </location>
</feature>
<feature type="topological domain" description="Lumenal" evidence="1">
    <location>
        <position position="293"/>
    </location>
</feature>
<feature type="transmembrane region" description="Helical" evidence="2">
    <location>
        <begin position="294"/>
        <end position="314"/>
    </location>
</feature>
<feature type="topological domain" description="Cytoplasmic" evidence="1">
    <location>
        <begin position="315"/>
        <end position="412"/>
    </location>
</feature>
<feature type="region of interest" description="Disordered" evidence="3">
    <location>
        <begin position="347"/>
        <end position="374"/>
    </location>
</feature>
<feature type="compositionally biased region" description="Polar residues" evidence="3">
    <location>
        <begin position="357"/>
        <end position="373"/>
    </location>
</feature>
<evidence type="ECO:0000250" key="1">
    <source>
        <dbReference type="UniProtKB" id="P40219"/>
    </source>
</evidence>
<evidence type="ECO:0000255" key="2"/>
<evidence type="ECO:0000256" key="3">
    <source>
        <dbReference type="SAM" id="MobiDB-lite"/>
    </source>
</evidence>
<evidence type="ECO:0000269" key="4">
    <source>
    </source>
</evidence>
<evidence type="ECO:0000269" key="5">
    <source>
    </source>
</evidence>
<evidence type="ECO:0000303" key="6">
    <source>
    </source>
</evidence>
<evidence type="ECO:0000303" key="7">
    <source>
    </source>
</evidence>
<evidence type="ECO:0000305" key="8"/>
<evidence type="ECO:0000305" key="9">
    <source>
    </source>
</evidence>